<reference key="1">
    <citation type="journal article" date="2005" name="J. Bacteriol.">
        <title>Genomic sequence of an otitis media isolate of nontypeable Haemophilus influenzae: comparative study with H. influenzae serotype d, strain KW20.</title>
        <authorList>
            <person name="Harrison A."/>
            <person name="Dyer D.W."/>
            <person name="Gillaspy A."/>
            <person name="Ray W.C."/>
            <person name="Mungur R."/>
            <person name="Carson M.B."/>
            <person name="Zhong H."/>
            <person name="Gipson J."/>
            <person name="Gipson M."/>
            <person name="Johnson L.S."/>
            <person name="Lewis L."/>
            <person name="Bakaletz L.O."/>
            <person name="Munson R.S. Jr."/>
        </authorList>
    </citation>
    <scope>NUCLEOTIDE SEQUENCE [LARGE SCALE GENOMIC DNA]</scope>
    <source>
        <strain>86-028NP</strain>
    </source>
</reference>
<sequence length="125" mass="14484">MRHYEIVFMVHPDQSEQVPGMIERYTGSVKEAGGQVHRLEDWGRRQLAYPINKLHKAHYVLMNVEAPQQVIDELETTFRYNDAVLRSLVIHTKHAVTEASPMKAAKEERKPLAEVENNDFEDAEE</sequence>
<organism>
    <name type="scientific">Haemophilus influenzae (strain 86-028NP)</name>
    <dbReference type="NCBI Taxonomy" id="281310"/>
    <lineage>
        <taxon>Bacteria</taxon>
        <taxon>Pseudomonadati</taxon>
        <taxon>Pseudomonadota</taxon>
        <taxon>Gammaproteobacteria</taxon>
        <taxon>Pasteurellales</taxon>
        <taxon>Pasteurellaceae</taxon>
        <taxon>Haemophilus</taxon>
    </lineage>
</organism>
<protein>
    <recommendedName>
        <fullName evidence="1">Small ribosomal subunit protein bS6</fullName>
    </recommendedName>
    <alternativeName>
        <fullName evidence="3">30S ribosomal protein S6</fullName>
    </alternativeName>
</protein>
<gene>
    <name evidence="1" type="primary">rpsF</name>
    <name type="ordered locus">NTHI0673</name>
</gene>
<comment type="function">
    <text evidence="1">Binds together with bS18 to 16S ribosomal RNA.</text>
</comment>
<comment type="similarity">
    <text evidence="1">Belongs to the bacterial ribosomal protein bS6 family.</text>
</comment>
<evidence type="ECO:0000255" key="1">
    <source>
        <dbReference type="HAMAP-Rule" id="MF_00360"/>
    </source>
</evidence>
<evidence type="ECO:0000256" key="2">
    <source>
        <dbReference type="SAM" id="MobiDB-lite"/>
    </source>
</evidence>
<evidence type="ECO:0000305" key="3"/>
<feature type="chain" id="PRO_0000229545" description="Small ribosomal subunit protein bS6">
    <location>
        <begin position="1"/>
        <end position="125"/>
    </location>
</feature>
<feature type="region of interest" description="Disordered" evidence="2">
    <location>
        <begin position="96"/>
        <end position="125"/>
    </location>
</feature>
<feature type="compositionally biased region" description="Basic and acidic residues" evidence="2">
    <location>
        <begin position="104"/>
        <end position="113"/>
    </location>
</feature>
<feature type="compositionally biased region" description="Acidic residues" evidence="2">
    <location>
        <begin position="116"/>
        <end position="125"/>
    </location>
</feature>
<dbReference type="EMBL" id="CP000057">
    <property type="protein sequence ID" value="AAX87596.1"/>
    <property type="molecule type" value="Genomic_DNA"/>
</dbReference>
<dbReference type="RefSeq" id="WP_005627620.1">
    <property type="nucleotide sequence ID" value="NC_007146.2"/>
</dbReference>
<dbReference type="SMR" id="Q4QN01"/>
<dbReference type="GeneID" id="93298321"/>
<dbReference type="KEGG" id="hit:NTHI0673"/>
<dbReference type="HOGENOM" id="CLU_113441_6_1_6"/>
<dbReference type="Proteomes" id="UP000002525">
    <property type="component" value="Chromosome"/>
</dbReference>
<dbReference type="GO" id="GO:0022627">
    <property type="term" value="C:cytosolic small ribosomal subunit"/>
    <property type="evidence" value="ECO:0007669"/>
    <property type="project" value="TreeGrafter"/>
</dbReference>
<dbReference type="GO" id="GO:0070181">
    <property type="term" value="F:small ribosomal subunit rRNA binding"/>
    <property type="evidence" value="ECO:0007669"/>
    <property type="project" value="TreeGrafter"/>
</dbReference>
<dbReference type="GO" id="GO:0003735">
    <property type="term" value="F:structural constituent of ribosome"/>
    <property type="evidence" value="ECO:0007669"/>
    <property type="project" value="InterPro"/>
</dbReference>
<dbReference type="GO" id="GO:0006412">
    <property type="term" value="P:translation"/>
    <property type="evidence" value="ECO:0007669"/>
    <property type="project" value="UniProtKB-UniRule"/>
</dbReference>
<dbReference type="CDD" id="cd00473">
    <property type="entry name" value="bS6"/>
    <property type="match status" value="1"/>
</dbReference>
<dbReference type="FunFam" id="3.30.70.60:FF:000003">
    <property type="entry name" value="30S ribosomal protein S6"/>
    <property type="match status" value="1"/>
</dbReference>
<dbReference type="Gene3D" id="3.30.70.60">
    <property type="match status" value="1"/>
</dbReference>
<dbReference type="HAMAP" id="MF_00360">
    <property type="entry name" value="Ribosomal_bS6"/>
    <property type="match status" value="1"/>
</dbReference>
<dbReference type="InterPro" id="IPR000529">
    <property type="entry name" value="Ribosomal_bS6"/>
</dbReference>
<dbReference type="InterPro" id="IPR020815">
    <property type="entry name" value="Ribosomal_bS6_CS"/>
</dbReference>
<dbReference type="InterPro" id="IPR035980">
    <property type="entry name" value="Ribosomal_bS6_sf"/>
</dbReference>
<dbReference type="InterPro" id="IPR020814">
    <property type="entry name" value="Ribosomal_S6_plastid/chlpt"/>
</dbReference>
<dbReference type="InterPro" id="IPR014717">
    <property type="entry name" value="Transl_elong_EF1B/ribsomal_bS6"/>
</dbReference>
<dbReference type="NCBIfam" id="TIGR00166">
    <property type="entry name" value="S6"/>
    <property type="match status" value="1"/>
</dbReference>
<dbReference type="PANTHER" id="PTHR21011">
    <property type="entry name" value="MITOCHONDRIAL 28S RIBOSOMAL PROTEIN S6"/>
    <property type="match status" value="1"/>
</dbReference>
<dbReference type="PANTHER" id="PTHR21011:SF1">
    <property type="entry name" value="SMALL RIBOSOMAL SUBUNIT PROTEIN BS6M"/>
    <property type="match status" value="1"/>
</dbReference>
<dbReference type="Pfam" id="PF01250">
    <property type="entry name" value="Ribosomal_S6"/>
    <property type="match status" value="1"/>
</dbReference>
<dbReference type="SUPFAM" id="SSF54995">
    <property type="entry name" value="Ribosomal protein S6"/>
    <property type="match status" value="1"/>
</dbReference>
<dbReference type="PROSITE" id="PS01048">
    <property type="entry name" value="RIBOSOMAL_S6"/>
    <property type="match status" value="1"/>
</dbReference>
<proteinExistence type="inferred from homology"/>
<name>RS6_HAEI8</name>
<accession>Q4QN01</accession>
<keyword id="KW-0687">Ribonucleoprotein</keyword>
<keyword id="KW-0689">Ribosomal protein</keyword>
<keyword id="KW-0694">RNA-binding</keyword>
<keyword id="KW-0699">rRNA-binding</keyword>